<evidence type="ECO:0000255" key="1">
    <source>
        <dbReference type="PROSITE-ProRule" id="PRU00541"/>
    </source>
</evidence>
<evidence type="ECO:0000255" key="2">
    <source>
        <dbReference type="PROSITE-ProRule" id="PRU00542"/>
    </source>
</evidence>
<evidence type="ECO:0000256" key="3">
    <source>
        <dbReference type="SAM" id="MobiDB-lite"/>
    </source>
</evidence>
<evidence type="ECO:0000269" key="4">
    <source>
    </source>
</evidence>
<evidence type="ECO:0000269" key="5">
    <source>
    </source>
</evidence>
<evidence type="ECO:0000303" key="6">
    <source>
    </source>
</evidence>
<evidence type="ECO:0000303" key="7">
    <source>
    </source>
</evidence>
<evidence type="ECO:0000305" key="8"/>
<evidence type="ECO:0000312" key="9">
    <source>
        <dbReference type="Araport" id="AT1G32490"/>
    </source>
</evidence>
<evidence type="ECO:0000312" key="10">
    <source>
        <dbReference type="EMBL" id="AAF81347.1"/>
    </source>
</evidence>
<evidence type="ECO:0007744" key="11">
    <source>
    </source>
</evidence>
<name>ESP3_ARATH</name>
<protein>
    <recommendedName>
        <fullName evidence="8">Pre-mRNA-splicing factor ATP-dependent RNA helicase DEAH1</fullName>
        <ecNumber>3.6.4.13</ecNumber>
    </recommendedName>
    <alternativeName>
        <fullName evidence="7">DEAH RNA helicase homolog PRP2</fullName>
    </alternativeName>
    <alternativeName>
        <fullName evidence="6">Protein EMBRYO DEFECTIVE 2733</fullName>
    </alternativeName>
    <alternativeName>
        <fullName evidence="7">Protein ENHANCED SILENCING PHENOTYPE 3</fullName>
    </alternativeName>
</protein>
<reference key="1">
    <citation type="journal article" date="2000" name="Nature">
        <title>Sequence and analysis of chromosome 1 of the plant Arabidopsis thaliana.</title>
        <authorList>
            <person name="Theologis A."/>
            <person name="Ecker J.R."/>
            <person name="Palm C.J."/>
            <person name="Federspiel N.A."/>
            <person name="Kaul S."/>
            <person name="White O."/>
            <person name="Alonso J."/>
            <person name="Altafi H."/>
            <person name="Araujo R."/>
            <person name="Bowman C.L."/>
            <person name="Brooks S.Y."/>
            <person name="Buehler E."/>
            <person name="Chan A."/>
            <person name="Chao Q."/>
            <person name="Chen H."/>
            <person name="Cheuk R.F."/>
            <person name="Chin C.W."/>
            <person name="Chung M.K."/>
            <person name="Conn L."/>
            <person name="Conway A.B."/>
            <person name="Conway A.R."/>
            <person name="Creasy T.H."/>
            <person name="Dewar K."/>
            <person name="Dunn P."/>
            <person name="Etgu P."/>
            <person name="Feldblyum T.V."/>
            <person name="Feng J.-D."/>
            <person name="Fong B."/>
            <person name="Fujii C.Y."/>
            <person name="Gill J.E."/>
            <person name="Goldsmith A.D."/>
            <person name="Haas B."/>
            <person name="Hansen N.F."/>
            <person name="Hughes B."/>
            <person name="Huizar L."/>
            <person name="Hunter J.L."/>
            <person name="Jenkins J."/>
            <person name="Johnson-Hopson C."/>
            <person name="Khan S."/>
            <person name="Khaykin E."/>
            <person name="Kim C.J."/>
            <person name="Koo H.L."/>
            <person name="Kremenetskaia I."/>
            <person name="Kurtz D.B."/>
            <person name="Kwan A."/>
            <person name="Lam B."/>
            <person name="Langin-Hooper S."/>
            <person name="Lee A."/>
            <person name="Lee J.M."/>
            <person name="Lenz C.A."/>
            <person name="Li J.H."/>
            <person name="Li Y.-P."/>
            <person name="Lin X."/>
            <person name="Liu S.X."/>
            <person name="Liu Z.A."/>
            <person name="Luros J.S."/>
            <person name="Maiti R."/>
            <person name="Marziali A."/>
            <person name="Militscher J."/>
            <person name="Miranda M."/>
            <person name="Nguyen M."/>
            <person name="Nierman W.C."/>
            <person name="Osborne B.I."/>
            <person name="Pai G."/>
            <person name="Peterson J."/>
            <person name="Pham P.K."/>
            <person name="Rizzo M."/>
            <person name="Rooney T."/>
            <person name="Rowley D."/>
            <person name="Sakano H."/>
            <person name="Salzberg S.L."/>
            <person name="Schwartz J.R."/>
            <person name="Shinn P."/>
            <person name="Southwick A.M."/>
            <person name="Sun H."/>
            <person name="Tallon L.J."/>
            <person name="Tambunga G."/>
            <person name="Toriumi M.J."/>
            <person name="Town C.D."/>
            <person name="Utterback T."/>
            <person name="Van Aken S."/>
            <person name="Vaysberg M."/>
            <person name="Vysotskaia V.S."/>
            <person name="Walker M."/>
            <person name="Wu D."/>
            <person name="Yu G."/>
            <person name="Fraser C.M."/>
            <person name="Venter J.C."/>
            <person name="Davis R.W."/>
        </authorList>
    </citation>
    <scope>NUCLEOTIDE SEQUENCE [LARGE SCALE GENOMIC DNA]</scope>
    <source>
        <strain>cv. Columbia</strain>
    </source>
</reference>
<reference key="2">
    <citation type="journal article" date="2017" name="Plant J.">
        <title>Araport11: a complete reannotation of the Arabidopsis thaliana reference genome.</title>
        <authorList>
            <person name="Cheng C.Y."/>
            <person name="Krishnakumar V."/>
            <person name="Chan A.P."/>
            <person name="Thibaud-Nissen F."/>
            <person name="Schobel S."/>
            <person name="Town C.D."/>
        </authorList>
    </citation>
    <scope>GENOME REANNOTATION</scope>
    <source>
        <strain>cv. Columbia</strain>
    </source>
</reference>
<reference key="3">
    <citation type="journal article" date="2003" name="Science">
        <title>Empirical analysis of transcriptional activity in the Arabidopsis genome.</title>
        <authorList>
            <person name="Yamada K."/>
            <person name="Lim J."/>
            <person name="Dale J.M."/>
            <person name="Chen H."/>
            <person name="Shinn P."/>
            <person name="Palm C.J."/>
            <person name="Southwick A.M."/>
            <person name="Wu H.C."/>
            <person name="Kim C.J."/>
            <person name="Nguyen M."/>
            <person name="Pham P.K."/>
            <person name="Cheuk R.F."/>
            <person name="Karlin-Newmann G."/>
            <person name="Liu S.X."/>
            <person name="Lam B."/>
            <person name="Sakano H."/>
            <person name="Wu T."/>
            <person name="Yu G."/>
            <person name="Miranda M."/>
            <person name="Quach H.L."/>
            <person name="Tripp M."/>
            <person name="Chang C.H."/>
            <person name="Lee J.M."/>
            <person name="Toriumi M.J."/>
            <person name="Chan M.M."/>
            <person name="Tang C.C."/>
            <person name="Onodera C.S."/>
            <person name="Deng J.M."/>
            <person name="Akiyama K."/>
            <person name="Ansari Y."/>
            <person name="Arakawa T."/>
            <person name="Banh J."/>
            <person name="Banno F."/>
            <person name="Bowser L."/>
            <person name="Brooks S.Y."/>
            <person name="Carninci P."/>
            <person name="Chao Q."/>
            <person name="Choy N."/>
            <person name="Enju A."/>
            <person name="Goldsmith A.D."/>
            <person name="Gurjal M."/>
            <person name="Hansen N.F."/>
            <person name="Hayashizaki Y."/>
            <person name="Johnson-Hopson C."/>
            <person name="Hsuan V.W."/>
            <person name="Iida K."/>
            <person name="Karnes M."/>
            <person name="Khan S."/>
            <person name="Koesema E."/>
            <person name="Ishida J."/>
            <person name="Jiang P.X."/>
            <person name="Jones T."/>
            <person name="Kawai J."/>
            <person name="Kamiya A."/>
            <person name="Meyers C."/>
            <person name="Nakajima M."/>
            <person name="Narusaka M."/>
            <person name="Seki M."/>
            <person name="Sakurai T."/>
            <person name="Satou M."/>
            <person name="Tamse R."/>
            <person name="Vaysberg M."/>
            <person name="Wallender E.K."/>
            <person name="Wong C."/>
            <person name="Yamamura Y."/>
            <person name="Yuan S."/>
            <person name="Shinozaki K."/>
            <person name="Davis R.W."/>
            <person name="Theologis A."/>
            <person name="Ecker J.R."/>
        </authorList>
    </citation>
    <scope>NUCLEOTIDE SEQUENCE [LARGE SCALE MRNA]</scope>
    <source>
        <strain>cv. Columbia</strain>
    </source>
</reference>
<reference key="4">
    <citation type="journal article" date="2004" name="Plant Physiol.">
        <title>Identification of genes required for embryo development in Arabidopsis.</title>
        <authorList>
            <person name="Tzafrir I."/>
            <person name="Pena-Muralla R."/>
            <person name="Dickerman A."/>
            <person name="Berg M."/>
            <person name="Rogers R."/>
            <person name="Hutchens S."/>
            <person name="Sweeney T.C."/>
            <person name="McElver J."/>
            <person name="Aux G."/>
            <person name="Patton D."/>
            <person name="Meinke D."/>
        </authorList>
    </citation>
    <scope>IDENTIFICATION</scope>
    <scope>DISRUPTION PHENOTYPE</scope>
</reference>
<reference key="5">
    <citation type="journal article" date="2006" name="Nucleic Acids Res.">
        <title>Phosphoproteomics reveals extensive in vivo phosphorylation of Arabidopsis proteins involved in RNA metabolism.</title>
        <authorList>
            <person name="de la Fuente van Bentem S."/>
            <person name="Anrather D."/>
            <person name="Roitinger E."/>
            <person name="Djamei A."/>
            <person name="Hufnagl T."/>
            <person name="Barta A."/>
            <person name="Csaszar E."/>
            <person name="Dohnal I."/>
            <person name="Lecourieux D."/>
            <person name="Hirt H."/>
        </authorList>
    </citation>
    <scope>PHOSPHORYLATION [LARGE SCALE ANALYSIS] AT SER-135 AND SER-138</scope>
    <scope>IDENTIFICATION BY MASS SPECTROMETRY [LARGE SCALE ANALYSIS]</scope>
</reference>
<reference key="6">
    <citation type="journal article" date="2006" name="Proc. Natl. Acad. Sci. U.S.A.">
        <title>Defective RNA processing enhances RNA silencing and influences flowering of Arabidopsis.</title>
        <authorList>
            <person name="Herr A.J."/>
            <person name="Molnar A."/>
            <person name="Jones A."/>
            <person name="Baulcombe D.C."/>
        </authorList>
    </citation>
    <scope>DISRUPTION PHENOTYPE</scope>
    <scope>TISSUE SPECIFICITY</scope>
    <scope>FUNCTION</scope>
</reference>
<reference key="7">
    <citation type="journal article" date="2009" name="Plant Physiol.">
        <title>Large-scale Arabidopsis phosphoproteome profiling reveals novel chloroplast kinase substrates and phosphorylation networks.</title>
        <authorList>
            <person name="Reiland S."/>
            <person name="Messerli G."/>
            <person name="Baerenfaller K."/>
            <person name="Gerrits B."/>
            <person name="Endler A."/>
            <person name="Grossmann J."/>
            <person name="Gruissem W."/>
            <person name="Baginsky S."/>
        </authorList>
    </citation>
    <scope>IDENTIFICATION BY MASS SPECTROMETRY [LARGE SCALE ANALYSIS]</scope>
</reference>
<reference key="8">
    <citation type="journal article" date="2013" name="PLoS ONE">
        <title>Genome-wide comparative in silico analysis of the RNA helicase gene family in Zea mays and Glycine max: a comparison with Arabidopsis and Oryza sativa.</title>
        <authorList>
            <person name="Xu R."/>
            <person name="Zhang S."/>
            <person name="Huang J."/>
            <person name="Zheng C."/>
        </authorList>
    </citation>
    <scope>GENE FAMILY</scope>
</reference>
<accession>Q8VY00</accession>
<accession>Q9LQK8</accession>
<keyword id="KW-0025">Alternative splicing</keyword>
<keyword id="KW-0067">ATP-binding</keyword>
<keyword id="KW-0347">Helicase</keyword>
<keyword id="KW-0378">Hydrolase</keyword>
<keyword id="KW-0507">mRNA processing</keyword>
<keyword id="KW-0508">mRNA splicing</keyword>
<keyword id="KW-0547">Nucleotide-binding</keyword>
<keyword id="KW-0597">Phosphoprotein</keyword>
<keyword id="KW-1185">Reference proteome</keyword>
<keyword id="KW-0747">Spliceosome</keyword>
<proteinExistence type="evidence at protein level"/>
<comment type="function">
    <text evidence="5">Involved in pre-mRNA splicing.</text>
</comment>
<comment type="catalytic activity">
    <reaction>
        <text>ATP + H2O = ADP + phosphate + H(+)</text>
        <dbReference type="Rhea" id="RHEA:13065"/>
        <dbReference type="ChEBI" id="CHEBI:15377"/>
        <dbReference type="ChEBI" id="CHEBI:15378"/>
        <dbReference type="ChEBI" id="CHEBI:30616"/>
        <dbReference type="ChEBI" id="CHEBI:43474"/>
        <dbReference type="ChEBI" id="CHEBI:456216"/>
        <dbReference type="EC" id="3.6.4.13"/>
    </reaction>
</comment>
<comment type="alternative products">
    <event type="alternative splicing"/>
    <isoform>
        <id>Q8VY00-1</id>
        <name>1</name>
        <sequence type="displayed"/>
    </isoform>
    <text>A number of isoforms are produced.</text>
</comment>
<comment type="tissue specificity">
    <text evidence="5">Widely expressed.</text>
</comment>
<comment type="disruption phenotype">
    <text evidence="4 5">Embryo defective (PubMed:15266054). Reduced stature, early flowering and altered leaf morphology (PubMed:17008405).</text>
</comment>
<comment type="similarity">
    <text evidence="8">Belongs to the DEAD box helicase family. DEAH subfamily. PRP2 sub-subfamily.</text>
</comment>
<comment type="sequence caution" evidence="8">
    <conflict type="erroneous gene model prediction">
        <sequence resource="EMBL-CDS" id="AAF81347"/>
    </conflict>
</comment>
<comment type="online information" name="Seed defective Arabidopsis mutants">
    <link uri="http://seedgenes.org/MutantList"/>
</comment>
<dbReference type="EC" id="3.6.4.13"/>
<dbReference type="EMBL" id="AC007767">
    <property type="protein sequence ID" value="AAF81347.1"/>
    <property type="status" value="ALT_SEQ"/>
    <property type="molecule type" value="Genomic_DNA"/>
</dbReference>
<dbReference type="EMBL" id="CP002684">
    <property type="protein sequence ID" value="AEE31492.1"/>
    <property type="molecule type" value="Genomic_DNA"/>
</dbReference>
<dbReference type="EMBL" id="AY074318">
    <property type="protein sequence ID" value="AAL67014.1"/>
    <property type="molecule type" value="mRNA"/>
</dbReference>
<dbReference type="EMBL" id="AY133872">
    <property type="protein sequence ID" value="AAM91806.1"/>
    <property type="molecule type" value="mRNA"/>
</dbReference>
<dbReference type="PIR" id="C86450">
    <property type="entry name" value="C86450"/>
</dbReference>
<dbReference type="RefSeq" id="NP_174527.2">
    <molecule id="Q8VY00-1"/>
    <property type="nucleotide sequence ID" value="NM_102984.5"/>
</dbReference>
<dbReference type="SMR" id="Q8VY00"/>
<dbReference type="FunCoup" id="Q8VY00">
    <property type="interactions" value="3554"/>
</dbReference>
<dbReference type="IntAct" id="Q8VY00">
    <property type="interactions" value="1"/>
</dbReference>
<dbReference type="STRING" id="3702.Q8VY00"/>
<dbReference type="iPTMnet" id="Q8VY00"/>
<dbReference type="PaxDb" id="3702-AT1G32490.1"/>
<dbReference type="ProteomicsDB" id="220588">
    <molecule id="Q8VY00-1"/>
</dbReference>
<dbReference type="EnsemblPlants" id="AT1G32490.1">
    <molecule id="Q8VY00-1"/>
    <property type="protein sequence ID" value="AT1G32490.1"/>
    <property type="gene ID" value="AT1G32490"/>
</dbReference>
<dbReference type="GeneID" id="840143"/>
<dbReference type="Gramene" id="AT1G32490.1">
    <molecule id="Q8VY00-1"/>
    <property type="protein sequence ID" value="AT1G32490.1"/>
    <property type="gene ID" value="AT1G32490"/>
</dbReference>
<dbReference type="KEGG" id="ath:AT1G32490"/>
<dbReference type="Araport" id="AT1G32490"/>
<dbReference type="TAIR" id="AT1G32490">
    <property type="gene designation" value="ESP3"/>
</dbReference>
<dbReference type="eggNOG" id="KOG0923">
    <property type="taxonomic scope" value="Eukaryota"/>
</dbReference>
<dbReference type="InParanoid" id="Q8VY00"/>
<dbReference type="PhylomeDB" id="Q8VY00"/>
<dbReference type="CD-CODE" id="4299E36E">
    <property type="entry name" value="Nucleolus"/>
</dbReference>
<dbReference type="PRO" id="PR:Q8VY00"/>
<dbReference type="Proteomes" id="UP000006548">
    <property type="component" value="Chromosome 1"/>
</dbReference>
<dbReference type="ExpressionAtlas" id="Q8VY00">
    <property type="expression patterns" value="baseline and differential"/>
</dbReference>
<dbReference type="GO" id="GO:0016020">
    <property type="term" value="C:membrane"/>
    <property type="evidence" value="ECO:0000314"/>
    <property type="project" value="TAIR"/>
</dbReference>
<dbReference type="GO" id="GO:0005634">
    <property type="term" value="C:nucleus"/>
    <property type="evidence" value="ECO:0000314"/>
    <property type="project" value="TAIR"/>
</dbReference>
<dbReference type="GO" id="GO:0005681">
    <property type="term" value="C:spliceosomal complex"/>
    <property type="evidence" value="ECO:0007669"/>
    <property type="project" value="UniProtKB-KW"/>
</dbReference>
<dbReference type="GO" id="GO:0005524">
    <property type="term" value="F:ATP binding"/>
    <property type="evidence" value="ECO:0007669"/>
    <property type="project" value="UniProtKB-KW"/>
</dbReference>
<dbReference type="GO" id="GO:0016887">
    <property type="term" value="F:ATP hydrolysis activity"/>
    <property type="evidence" value="ECO:0007669"/>
    <property type="project" value="RHEA"/>
</dbReference>
<dbReference type="GO" id="GO:0003676">
    <property type="term" value="F:nucleic acid binding"/>
    <property type="evidence" value="ECO:0007669"/>
    <property type="project" value="InterPro"/>
</dbReference>
<dbReference type="GO" id="GO:0003724">
    <property type="term" value="F:RNA helicase activity"/>
    <property type="evidence" value="ECO:0007669"/>
    <property type="project" value="UniProtKB-EC"/>
</dbReference>
<dbReference type="GO" id="GO:0006397">
    <property type="term" value="P:mRNA processing"/>
    <property type="evidence" value="ECO:0007669"/>
    <property type="project" value="UniProtKB-KW"/>
</dbReference>
<dbReference type="GO" id="GO:0035194">
    <property type="term" value="P:regulatory ncRNA-mediated post-transcriptional gene silencing"/>
    <property type="evidence" value="ECO:0000315"/>
    <property type="project" value="TAIR"/>
</dbReference>
<dbReference type="GO" id="GO:0008380">
    <property type="term" value="P:RNA splicing"/>
    <property type="evidence" value="ECO:0000315"/>
    <property type="project" value="UniProtKB"/>
</dbReference>
<dbReference type="CDD" id="cd18791">
    <property type="entry name" value="SF2_C_RHA"/>
    <property type="match status" value="1"/>
</dbReference>
<dbReference type="FunFam" id="1.20.120.1080:FF:000001">
    <property type="entry name" value="Pre-mRNA-splicing factor ATP-dependent RNA helicase"/>
    <property type="match status" value="1"/>
</dbReference>
<dbReference type="FunFam" id="3.40.50.300:FF:000007">
    <property type="entry name" value="Pre-mRNA-splicing factor ATP-dependent RNA helicase"/>
    <property type="match status" value="1"/>
</dbReference>
<dbReference type="FunFam" id="3.40.50.300:FF:000594">
    <property type="entry name" value="Pre-mRNA-splicing factor ATP-dependent RNA helicase"/>
    <property type="match status" value="1"/>
</dbReference>
<dbReference type="Gene3D" id="1.20.120.1080">
    <property type="match status" value="1"/>
</dbReference>
<dbReference type="Gene3D" id="3.40.50.300">
    <property type="entry name" value="P-loop containing nucleotide triphosphate hydrolases"/>
    <property type="match status" value="2"/>
</dbReference>
<dbReference type="InterPro" id="IPR011709">
    <property type="entry name" value="DEAD-box_helicase_OB_fold"/>
</dbReference>
<dbReference type="InterPro" id="IPR011545">
    <property type="entry name" value="DEAD/DEAH_box_helicase_dom"/>
</dbReference>
<dbReference type="InterPro" id="IPR002464">
    <property type="entry name" value="DNA/RNA_helicase_DEAH_CS"/>
</dbReference>
<dbReference type="InterPro" id="IPR048333">
    <property type="entry name" value="HA2_WH"/>
</dbReference>
<dbReference type="InterPro" id="IPR007502">
    <property type="entry name" value="Helicase-assoc_dom"/>
</dbReference>
<dbReference type="InterPro" id="IPR014001">
    <property type="entry name" value="Helicase_ATP-bd"/>
</dbReference>
<dbReference type="InterPro" id="IPR001650">
    <property type="entry name" value="Helicase_C-like"/>
</dbReference>
<dbReference type="InterPro" id="IPR027417">
    <property type="entry name" value="P-loop_NTPase"/>
</dbReference>
<dbReference type="PANTHER" id="PTHR18934">
    <property type="entry name" value="ATP-DEPENDENT RNA HELICASE"/>
    <property type="match status" value="1"/>
</dbReference>
<dbReference type="PANTHER" id="PTHR18934:SF83">
    <property type="entry name" value="PRE-MRNA-SPLICING FACTOR ATP-DEPENDENT RNA HELICASE DHX16"/>
    <property type="match status" value="1"/>
</dbReference>
<dbReference type="Pfam" id="PF00270">
    <property type="entry name" value="DEAD"/>
    <property type="match status" value="1"/>
</dbReference>
<dbReference type="Pfam" id="PF21010">
    <property type="entry name" value="HA2_C"/>
    <property type="match status" value="1"/>
</dbReference>
<dbReference type="Pfam" id="PF04408">
    <property type="entry name" value="HA2_N"/>
    <property type="match status" value="1"/>
</dbReference>
<dbReference type="Pfam" id="PF00271">
    <property type="entry name" value="Helicase_C"/>
    <property type="match status" value="1"/>
</dbReference>
<dbReference type="Pfam" id="PF07717">
    <property type="entry name" value="OB_NTP_bind"/>
    <property type="match status" value="1"/>
</dbReference>
<dbReference type="SMART" id="SM00487">
    <property type="entry name" value="DEXDc"/>
    <property type="match status" value="1"/>
</dbReference>
<dbReference type="SMART" id="SM00847">
    <property type="entry name" value="HA2"/>
    <property type="match status" value="1"/>
</dbReference>
<dbReference type="SMART" id="SM00490">
    <property type="entry name" value="HELICc"/>
    <property type="match status" value="1"/>
</dbReference>
<dbReference type="SUPFAM" id="SSF52540">
    <property type="entry name" value="P-loop containing nucleoside triphosphate hydrolases"/>
    <property type="match status" value="1"/>
</dbReference>
<dbReference type="PROSITE" id="PS00690">
    <property type="entry name" value="DEAH_ATP_HELICASE"/>
    <property type="match status" value="1"/>
</dbReference>
<dbReference type="PROSITE" id="PS51192">
    <property type="entry name" value="HELICASE_ATP_BIND_1"/>
    <property type="match status" value="1"/>
</dbReference>
<dbReference type="PROSITE" id="PS51194">
    <property type="entry name" value="HELICASE_CTER"/>
    <property type="match status" value="1"/>
</dbReference>
<sequence length="1044" mass="118832">MASNDLKTWVSDKLMMLLGYSQAAVVNYLIAMAKKTKSPTELVGELVDYGFSSSGDTRSFAEEIFARVPRKTAGVNLYQKHEAEAAMLVRKQKTYALLDADDDEDEVVVEKKSSVSESRKSDKGKKRFRKKSGQSDESDGEVAVREDSRHVRRKVSEEDDGSESEEERVRDQKEREELEQHLKDRDTARTRKLTEQTLSKKEKEEAVRRANALEKDDLYSLRKVSRQEYLKKREQKKLDELRDEIEDEQYLFGGEKLTETELREFRYKKELYDLVKKRTQDEDNVEEYRIPDAYDQEGGVDQEKRFSVAVQRYRDLDSTEKMNPFAEQEAWEDHQIGKATLKFGAKNKQASDDYQFVFEDQINFIKESVMAGENYEDAMDAKQKSQDLAEKTALEELQEVRRSLPIYTYRDQLLKAVEEHQVLVIVGDTGSGKTTQIPQYLHEAGYTKRGKVGCTQPRRVAAMSVAARVAQEMGVKLGHEVGYSIRFEDCTSDKTVLKYMTDGMLLRELLGEPDLASYSVVIVDEAHERTLSTDILFGLVKDIARFRPDLKLLISSATMDAEKFSDYFDTAPIFSFPGRRYPVEINYTSAPEADYMDAAIVTILTIHVREPLGDILVFFTGQEEIETAEEILKHRIRGLGTKIRELIICPIYANLPSELQAKIFEPTPEGARKVVLATNIAETSLTIDGIKYVVDPGFSKMKSYNPRTGMESLLITPISKASATQRAGRAGRTSPGKCYRLYTAFNYNNDLEENTVPEVQRTNLASVVLALKSLGIHDLINFDFMDPPPAEALVKSLELLFALGALNKLGELTKAGRRMAEFPLDPMLSKMIVVSDKYKCSDEIISIAAMLSIGGSIFYRPKDKQVHADNARMNFHTGNVGDHIALLKVYSSWKETNFSTQWCYENYIQVRSMKRARDIRDQLEGLLERVEIDISSNLNELDSVRKSIVAGFFPHTAKLQKNGSYRTVKHPQTVHIHPNSGLSQVLPRWVVYHELVLTSKEYMRQVTELKPEWLIELAPHYYQLKDVEDAASKKMPKGAGKAAM</sequence>
<gene>
    <name evidence="7" type="primary">ESP3</name>
    <name evidence="6" type="synonym">EMB2733</name>
    <name evidence="9" type="ordered locus">At1g32490</name>
    <name evidence="10" type="ORF">F5D14.27</name>
</gene>
<feature type="chain" id="PRO_0000434940" description="Pre-mRNA-splicing factor ATP-dependent RNA helicase DEAH1">
    <location>
        <begin position="1"/>
        <end position="1044"/>
    </location>
</feature>
<feature type="domain" description="Helicase ATP-binding" evidence="1">
    <location>
        <begin position="414"/>
        <end position="577"/>
    </location>
</feature>
<feature type="domain" description="Helicase C-terminal" evidence="2">
    <location>
        <begin position="600"/>
        <end position="775"/>
    </location>
</feature>
<feature type="region of interest" description="Disordered" evidence="3">
    <location>
        <begin position="106"/>
        <end position="206"/>
    </location>
</feature>
<feature type="short sequence motif" description="DEAH box" evidence="1">
    <location>
        <begin position="524"/>
        <end position="527"/>
    </location>
</feature>
<feature type="compositionally biased region" description="Basic and acidic residues" evidence="3">
    <location>
        <begin position="108"/>
        <end position="121"/>
    </location>
</feature>
<feature type="compositionally biased region" description="Basic residues" evidence="3">
    <location>
        <begin position="122"/>
        <end position="132"/>
    </location>
</feature>
<feature type="compositionally biased region" description="Acidic residues" evidence="3">
    <location>
        <begin position="157"/>
        <end position="166"/>
    </location>
</feature>
<feature type="compositionally biased region" description="Basic and acidic residues" evidence="3">
    <location>
        <begin position="167"/>
        <end position="206"/>
    </location>
</feature>
<feature type="binding site" evidence="1">
    <location>
        <begin position="427"/>
        <end position="434"/>
    </location>
    <ligand>
        <name>ATP</name>
        <dbReference type="ChEBI" id="CHEBI:30616"/>
    </ligand>
</feature>
<feature type="modified residue" description="Phosphoserine" evidence="11">
    <location>
        <position position="135"/>
    </location>
</feature>
<feature type="modified residue" description="Phosphoserine" evidence="11">
    <location>
        <position position="138"/>
    </location>
</feature>
<organism>
    <name type="scientific">Arabidopsis thaliana</name>
    <name type="common">Mouse-ear cress</name>
    <dbReference type="NCBI Taxonomy" id="3702"/>
    <lineage>
        <taxon>Eukaryota</taxon>
        <taxon>Viridiplantae</taxon>
        <taxon>Streptophyta</taxon>
        <taxon>Embryophyta</taxon>
        <taxon>Tracheophyta</taxon>
        <taxon>Spermatophyta</taxon>
        <taxon>Magnoliopsida</taxon>
        <taxon>eudicotyledons</taxon>
        <taxon>Gunneridae</taxon>
        <taxon>Pentapetalae</taxon>
        <taxon>rosids</taxon>
        <taxon>malvids</taxon>
        <taxon>Brassicales</taxon>
        <taxon>Brassicaceae</taxon>
        <taxon>Camelineae</taxon>
        <taxon>Arabidopsis</taxon>
    </lineage>
</organism>